<name>TRUA_THEGJ</name>
<organism>
    <name type="scientific">Thermococcus gammatolerans (strain DSM 15229 / JCM 11827 / EJ3)</name>
    <dbReference type="NCBI Taxonomy" id="593117"/>
    <lineage>
        <taxon>Archaea</taxon>
        <taxon>Methanobacteriati</taxon>
        <taxon>Methanobacteriota</taxon>
        <taxon>Thermococci</taxon>
        <taxon>Thermococcales</taxon>
        <taxon>Thermococcaceae</taxon>
        <taxon>Thermococcus</taxon>
    </lineage>
</organism>
<keyword id="KW-0413">Isomerase</keyword>
<keyword id="KW-1185">Reference proteome</keyword>
<keyword id="KW-0819">tRNA processing</keyword>
<evidence type="ECO:0000255" key="1">
    <source>
        <dbReference type="HAMAP-Rule" id="MF_00171"/>
    </source>
</evidence>
<feature type="chain" id="PRO_1000203701" description="tRNA pseudouridine synthase A">
    <location>
        <begin position="1"/>
        <end position="267"/>
    </location>
</feature>
<feature type="active site" description="Nucleophile" evidence="1">
    <location>
        <position position="55"/>
    </location>
</feature>
<feature type="binding site" evidence="1">
    <location>
        <position position="111"/>
    </location>
    <ligand>
        <name>substrate</name>
    </ligand>
</feature>
<gene>
    <name evidence="1" type="primary">truA</name>
    <name type="ordered locus">TGAM_1659</name>
</gene>
<sequence>MKLALRIAYDGTAFYGFQRQPGIRTVEGELINVLTKLKIIESPEKNDFKGASRTDRGVSAFFNVVSFVPGERADLARPEVLNHNLHDLWVLGVAEVPDDFHPRFWAISKTYRYYLIDEGFELEKMVGCAKLFEGRHDFSAFARLEPGRDPVREITHISITPRHGYYVIEITGKSFLWEMVRRIVNALRFCGLSLLEPEEVGAMLSGVYEKKVPPAPPENLILWHIEYPNVEFKTDGKSLSKARRDLFERYSRALARAALFGDCLVEL</sequence>
<reference key="1">
    <citation type="journal article" date="2007" name="Genome Biol.">
        <title>Genome analysis and genome-wide proteomics of Thermococcus gammatolerans, the most radioresistant organism known amongst the Archaea.</title>
        <authorList>
            <person name="Zivanovic Y."/>
            <person name="Armengaud J."/>
            <person name="Lagorce A."/>
            <person name="Leplat C."/>
            <person name="Guerin P."/>
            <person name="Dutertre M."/>
            <person name="Anthouard V."/>
            <person name="Forterre P."/>
            <person name="Wincker P."/>
            <person name="Confalonieri F."/>
        </authorList>
    </citation>
    <scope>NUCLEOTIDE SEQUENCE [LARGE SCALE GENOMIC DNA]</scope>
    <source>
        <strain>DSM 15229 / JCM 11827 / EJ3</strain>
    </source>
</reference>
<dbReference type="EC" id="5.4.99.12" evidence="1"/>
<dbReference type="EMBL" id="CP001398">
    <property type="protein sequence ID" value="ACS34161.1"/>
    <property type="molecule type" value="Genomic_DNA"/>
</dbReference>
<dbReference type="RefSeq" id="WP_015859272.1">
    <property type="nucleotide sequence ID" value="NC_012804.1"/>
</dbReference>
<dbReference type="SMR" id="C5A7E9"/>
<dbReference type="STRING" id="593117.TGAM_1659"/>
<dbReference type="PaxDb" id="593117-TGAM_1659"/>
<dbReference type="GeneID" id="7987569"/>
<dbReference type="KEGG" id="tga:TGAM_1659"/>
<dbReference type="eggNOG" id="arCOG04449">
    <property type="taxonomic scope" value="Archaea"/>
</dbReference>
<dbReference type="HOGENOM" id="CLU_014673_4_2_2"/>
<dbReference type="OrthoDB" id="25720at2157"/>
<dbReference type="Proteomes" id="UP000001488">
    <property type="component" value="Chromosome"/>
</dbReference>
<dbReference type="GO" id="GO:0003723">
    <property type="term" value="F:RNA binding"/>
    <property type="evidence" value="ECO:0007669"/>
    <property type="project" value="InterPro"/>
</dbReference>
<dbReference type="GO" id="GO:0160147">
    <property type="term" value="F:tRNA pseudouridine(38-40) synthase activity"/>
    <property type="evidence" value="ECO:0007669"/>
    <property type="project" value="UniProtKB-EC"/>
</dbReference>
<dbReference type="GO" id="GO:0031119">
    <property type="term" value="P:tRNA pseudouridine synthesis"/>
    <property type="evidence" value="ECO:0007669"/>
    <property type="project" value="UniProtKB-UniRule"/>
</dbReference>
<dbReference type="Gene3D" id="3.30.70.660">
    <property type="entry name" value="Pseudouridine synthase I, catalytic domain, C-terminal subdomain"/>
    <property type="match status" value="1"/>
</dbReference>
<dbReference type="Gene3D" id="3.30.70.580">
    <property type="entry name" value="Pseudouridine synthase I, catalytic domain, N-terminal subdomain"/>
    <property type="match status" value="1"/>
</dbReference>
<dbReference type="HAMAP" id="MF_00171">
    <property type="entry name" value="TruA"/>
    <property type="match status" value="1"/>
</dbReference>
<dbReference type="InterPro" id="IPR020103">
    <property type="entry name" value="PsdUridine_synth_cat_dom_sf"/>
</dbReference>
<dbReference type="InterPro" id="IPR001406">
    <property type="entry name" value="PsdUridine_synth_TruA"/>
</dbReference>
<dbReference type="InterPro" id="IPR020097">
    <property type="entry name" value="PsdUridine_synth_TruA_a/b_dom"/>
</dbReference>
<dbReference type="InterPro" id="IPR020095">
    <property type="entry name" value="PsdUridine_synth_TruA_C"/>
</dbReference>
<dbReference type="InterPro" id="IPR020094">
    <property type="entry name" value="TruA/RsuA/RluB/E/F_N"/>
</dbReference>
<dbReference type="NCBIfam" id="TIGR00071">
    <property type="entry name" value="hisT_truA"/>
    <property type="match status" value="1"/>
</dbReference>
<dbReference type="PANTHER" id="PTHR11142">
    <property type="entry name" value="PSEUDOURIDYLATE SYNTHASE"/>
    <property type="match status" value="1"/>
</dbReference>
<dbReference type="PANTHER" id="PTHR11142:SF0">
    <property type="entry name" value="TRNA PSEUDOURIDINE SYNTHASE-LIKE 1"/>
    <property type="match status" value="1"/>
</dbReference>
<dbReference type="Pfam" id="PF01416">
    <property type="entry name" value="PseudoU_synth_1"/>
    <property type="match status" value="1"/>
</dbReference>
<dbReference type="PIRSF" id="PIRSF001430">
    <property type="entry name" value="tRNA_psdUrid_synth"/>
    <property type="match status" value="1"/>
</dbReference>
<dbReference type="SUPFAM" id="SSF55120">
    <property type="entry name" value="Pseudouridine synthase"/>
    <property type="match status" value="1"/>
</dbReference>
<comment type="function">
    <text evidence="1">Formation of pseudouridine at positions 38, 39 and 40 in the anticodon stem and loop of transfer RNAs.</text>
</comment>
<comment type="catalytic activity">
    <reaction evidence="1">
        <text>uridine(38/39/40) in tRNA = pseudouridine(38/39/40) in tRNA</text>
        <dbReference type="Rhea" id="RHEA:22376"/>
        <dbReference type="Rhea" id="RHEA-COMP:10085"/>
        <dbReference type="Rhea" id="RHEA-COMP:10087"/>
        <dbReference type="ChEBI" id="CHEBI:65314"/>
        <dbReference type="ChEBI" id="CHEBI:65315"/>
        <dbReference type="EC" id="5.4.99.12"/>
    </reaction>
</comment>
<comment type="similarity">
    <text evidence="1">Belongs to the tRNA pseudouridine synthase TruA family.</text>
</comment>
<proteinExistence type="inferred from homology"/>
<protein>
    <recommendedName>
        <fullName evidence="1">tRNA pseudouridine synthase A</fullName>
        <ecNumber evidence="1">5.4.99.12</ecNumber>
    </recommendedName>
    <alternativeName>
        <fullName evidence="1">tRNA pseudouridine(38-40) synthase</fullName>
    </alternativeName>
    <alternativeName>
        <fullName evidence="1">tRNA pseudouridylate synthase I</fullName>
    </alternativeName>
    <alternativeName>
        <fullName evidence="1">tRNA-uridine isomerase I</fullName>
    </alternativeName>
</protein>
<accession>C5A7E9</accession>